<protein>
    <recommendedName>
        <fullName>SAP30-binding protein</fullName>
    </recommendedName>
    <alternativeName>
        <fullName>Transcriptional regulator protein HCNGP</fullName>
    </alternativeName>
</protein>
<comment type="function">
    <text evidence="1 3">Plays a role in transcriptional repression by promoting histone deacetylase activity, leading to deacetylation of histone H3 (By similarity). May be involved in the regulation of beta-2-microglobulin genes (PubMed:1459361).</text>
</comment>
<comment type="subunit">
    <text evidence="1">Interacts with histone deacetylase complex subunit SAP30.</text>
</comment>
<comment type="subcellular location">
    <subcellularLocation>
        <location evidence="3">Nucleus</location>
    </subcellularLocation>
</comment>
<comment type="similarity">
    <text evidence="4">Belongs to the HCNGP family.</text>
</comment>
<gene>
    <name type="primary">Sap30bp</name>
    <name type="synonym">Hcngp</name>
</gene>
<organism>
    <name type="scientific">Mus musculus</name>
    <name type="common">Mouse</name>
    <dbReference type="NCBI Taxonomy" id="10090"/>
    <lineage>
        <taxon>Eukaryota</taxon>
        <taxon>Metazoa</taxon>
        <taxon>Chordata</taxon>
        <taxon>Craniata</taxon>
        <taxon>Vertebrata</taxon>
        <taxon>Euteleostomi</taxon>
        <taxon>Mammalia</taxon>
        <taxon>Eutheria</taxon>
        <taxon>Euarchontoglires</taxon>
        <taxon>Glires</taxon>
        <taxon>Rodentia</taxon>
        <taxon>Myomorpha</taxon>
        <taxon>Muroidea</taxon>
        <taxon>Muridae</taxon>
        <taxon>Murinae</taxon>
        <taxon>Mus</taxon>
        <taxon>Mus</taxon>
    </lineage>
</organism>
<reference key="1">
    <citation type="journal article" date="1992" name="Differentiation">
        <title>The chromatin structure of the mouse beta-2-microglobulin locus.</title>
        <authorList>
            <person name="Palmer D.B."/>
            <person name="McVey J.H."/>
            <person name="Robinson P.J."/>
            <person name="Dyson P.J."/>
        </authorList>
    </citation>
    <scope>NUCLEOTIDE SEQUENCE [MRNA]</scope>
    <scope>SUBCELLULAR LOCATION</scope>
    <source>
        <tissue>Spleen</tissue>
    </source>
</reference>
<reference key="2">
    <citation type="journal article" date="2005" name="Science">
        <title>The transcriptional landscape of the mammalian genome.</title>
        <authorList>
            <person name="Carninci P."/>
            <person name="Kasukawa T."/>
            <person name="Katayama S."/>
            <person name="Gough J."/>
            <person name="Frith M.C."/>
            <person name="Maeda N."/>
            <person name="Oyama R."/>
            <person name="Ravasi T."/>
            <person name="Lenhard B."/>
            <person name="Wells C."/>
            <person name="Kodzius R."/>
            <person name="Shimokawa K."/>
            <person name="Bajic V.B."/>
            <person name="Brenner S.E."/>
            <person name="Batalov S."/>
            <person name="Forrest A.R."/>
            <person name="Zavolan M."/>
            <person name="Davis M.J."/>
            <person name="Wilming L.G."/>
            <person name="Aidinis V."/>
            <person name="Allen J.E."/>
            <person name="Ambesi-Impiombato A."/>
            <person name="Apweiler R."/>
            <person name="Aturaliya R.N."/>
            <person name="Bailey T.L."/>
            <person name="Bansal M."/>
            <person name="Baxter L."/>
            <person name="Beisel K.W."/>
            <person name="Bersano T."/>
            <person name="Bono H."/>
            <person name="Chalk A.M."/>
            <person name="Chiu K.P."/>
            <person name="Choudhary V."/>
            <person name="Christoffels A."/>
            <person name="Clutterbuck D.R."/>
            <person name="Crowe M.L."/>
            <person name="Dalla E."/>
            <person name="Dalrymple B.P."/>
            <person name="de Bono B."/>
            <person name="Della Gatta G."/>
            <person name="di Bernardo D."/>
            <person name="Down T."/>
            <person name="Engstrom P."/>
            <person name="Fagiolini M."/>
            <person name="Faulkner G."/>
            <person name="Fletcher C.F."/>
            <person name="Fukushima T."/>
            <person name="Furuno M."/>
            <person name="Futaki S."/>
            <person name="Gariboldi M."/>
            <person name="Georgii-Hemming P."/>
            <person name="Gingeras T.R."/>
            <person name="Gojobori T."/>
            <person name="Green R.E."/>
            <person name="Gustincich S."/>
            <person name="Harbers M."/>
            <person name="Hayashi Y."/>
            <person name="Hensch T.K."/>
            <person name="Hirokawa N."/>
            <person name="Hill D."/>
            <person name="Huminiecki L."/>
            <person name="Iacono M."/>
            <person name="Ikeo K."/>
            <person name="Iwama A."/>
            <person name="Ishikawa T."/>
            <person name="Jakt M."/>
            <person name="Kanapin A."/>
            <person name="Katoh M."/>
            <person name="Kawasawa Y."/>
            <person name="Kelso J."/>
            <person name="Kitamura H."/>
            <person name="Kitano H."/>
            <person name="Kollias G."/>
            <person name="Krishnan S.P."/>
            <person name="Kruger A."/>
            <person name="Kummerfeld S.K."/>
            <person name="Kurochkin I.V."/>
            <person name="Lareau L.F."/>
            <person name="Lazarevic D."/>
            <person name="Lipovich L."/>
            <person name="Liu J."/>
            <person name="Liuni S."/>
            <person name="McWilliam S."/>
            <person name="Madan Babu M."/>
            <person name="Madera M."/>
            <person name="Marchionni L."/>
            <person name="Matsuda H."/>
            <person name="Matsuzawa S."/>
            <person name="Miki H."/>
            <person name="Mignone F."/>
            <person name="Miyake S."/>
            <person name="Morris K."/>
            <person name="Mottagui-Tabar S."/>
            <person name="Mulder N."/>
            <person name="Nakano N."/>
            <person name="Nakauchi H."/>
            <person name="Ng P."/>
            <person name="Nilsson R."/>
            <person name="Nishiguchi S."/>
            <person name="Nishikawa S."/>
            <person name="Nori F."/>
            <person name="Ohara O."/>
            <person name="Okazaki Y."/>
            <person name="Orlando V."/>
            <person name="Pang K.C."/>
            <person name="Pavan W.J."/>
            <person name="Pavesi G."/>
            <person name="Pesole G."/>
            <person name="Petrovsky N."/>
            <person name="Piazza S."/>
            <person name="Reed J."/>
            <person name="Reid J.F."/>
            <person name="Ring B.Z."/>
            <person name="Ringwald M."/>
            <person name="Rost B."/>
            <person name="Ruan Y."/>
            <person name="Salzberg S.L."/>
            <person name="Sandelin A."/>
            <person name="Schneider C."/>
            <person name="Schoenbach C."/>
            <person name="Sekiguchi K."/>
            <person name="Semple C.A."/>
            <person name="Seno S."/>
            <person name="Sessa L."/>
            <person name="Sheng Y."/>
            <person name="Shibata Y."/>
            <person name="Shimada H."/>
            <person name="Shimada K."/>
            <person name="Silva D."/>
            <person name="Sinclair B."/>
            <person name="Sperling S."/>
            <person name="Stupka E."/>
            <person name="Sugiura K."/>
            <person name="Sultana R."/>
            <person name="Takenaka Y."/>
            <person name="Taki K."/>
            <person name="Tammoja K."/>
            <person name="Tan S.L."/>
            <person name="Tang S."/>
            <person name="Taylor M.S."/>
            <person name="Tegner J."/>
            <person name="Teichmann S.A."/>
            <person name="Ueda H.R."/>
            <person name="van Nimwegen E."/>
            <person name="Verardo R."/>
            <person name="Wei C.L."/>
            <person name="Yagi K."/>
            <person name="Yamanishi H."/>
            <person name="Zabarovsky E."/>
            <person name="Zhu S."/>
            <person name="Zimmer A."/>
            <person name="Hide W."/>
            <person name="Bult C."/>
            <person name="Grimmond S.M."/>
            <person name="Teasdale R.D."/>
            <person name="Liu E.T."/>
            <person name="Brusic V."/>
            <person name="Quackenbush J."/>
            <person name="Wahlestedt C."/>
            <person name="Mattick J.S."/>
            <person name="Hume D.A."/>
            <person name="Kai C."/>
            <person name="Sasaki D."/>
            <person name="Tomaru Y."/>
            <person name="Fukuda S."/>
            <person name="Kanamori-Katayama M."/>
            <person name="Suzuki M."/>
            <person name="Aoki J."/>
            <person name="Arakawa T."/>
            <person name="Iida J."/>
            <person name="Imamura K."/>
            <person name="Itoh M."/>
            <person name="Kato T."/>
            <person name="Kawaji H."/>
            <person name="Kawagashira N."/>
            <person name="Kawashima T."/>
            <person name="Kojima M."/>
            <person name="Kondo S."/>
            <person name="Konno H."/>
            <person name="Nakano K."/>
            <person name="Ninomiya N."/>
            <person name="Nishio T."/>
            <person name="Okada M."/>
            <person name="Plessy C."/>
            <person name="Shibata K."/>
            <person name="Shiraki T."/>
            <person name="Suzuki S."/>
            <person name="Tagami M."/>
            <person name="Waki K."/>
            <person name="Watahiki A."/>
            <person name="Okamura-Oho Y."/>
            <person name="Suzuki H."/>
            <person name="Kawai J."/>
            <person name="Hayashizaki Y."/>
        </authorList>
    </citation>
    <scope>NUCLEOTIDE SEQUENCE [LARGE SCALE MRNA]</scope>
    <source>
        <strain>C57BL/6J</strain>
        <tissue>Melanocyte</tissue>
    </source>
</reference>
<reference key="3">
    <citation type="journal article" date="2004" name="Genome Res.">
        <title>The status, quality, and expansion of the NIH full-length cDNA project: the Mammalian Gene Collection (MGC).</title>
        <authorList>
            <consortium name="The MGC Project Team"/>
        </authorList>
    </citation>
    <scope>NUCLEOTIDE SEQUENCE [LARGE SCALE MRNA]</scope>
    <source>
        <strain>Czech II</strain>
        <tissue>Mammary gland</tissue>
    </source>
</reference>
<reference key="4">
    <citation type="journal article" date="2010" name="Cell">
        <title>A tissue-specific atlas of mouse protein phosphorylation and expression.</title>
        <authorList>
            <person name="Huttlin E.L."/>
            <person name="Jedrychowski M.P."/>
            <person name="Elias J.E."/>
            <person name="Goswami T."/>
            <person name="Rad R."/>
            <person name="Beausoleil S.A."/>
            <person name="Villen J."/>
            <person name="Haas W."/>
            <person name="Sowa M.E."/>
            <person name="Gygi S.P."/>
        </authorList>
    </citation>
    <scope>PHOSPHORYLATION [LARGE SCALE ANALYSIS] AT SER-113</scope>
    <scope>IDENTIFICATION BY MASS SPECTROMETRY [LARGE SCALE ANALYSIS]</scope>
    <source>
        <tissue>Kidney</tissue>
        <tissue>Spleen</tissue>
    </source>
</reference>
<name>S30BP_MOUSE</name>
<feature type="chain" id="PRO_0000083924" description="SAP30-binding protein">
    <location>
        <begin position="1"/>
        <end position="308"/>
    </location>
</feature>
<feature type="region of interest" description="Disordered" evidence="2">
    <location>
        <begin position="15"/>
        <end position="101"/>
    </location>
</feature>
<feature type="compositionally biased region" description="Acidic residues" evidence="2">
    <location>
        <begin position="57"/>
        <end position="78"/>
    </location>
</feature>
<feature type="compositionally biased region" description="Basic and acidic residues" evidence="2">
    <location>
        <begin position="79"/>
        <end position="99"/>
    </location>
</feature>
<feature type="modified residue" description="Phosphoserine" evidence="1">
    <location>
        <position position="18"/>
    </location>
</feature>
<feature type="modified residue" description="Phosphoserine" evidence="1">
    <location>
        <position position="22"/>
    </location>
</feature>
<feature type="modified residue" description="Phosphoserine" evidence="1">
    <location>
        <position position="43"/>
    </location>
</feature>
<feature type="modified residue" description="Phosphoserine" evidence="1">
    <location>
        <position position="52"/>
    </location>
</feature>
<feature type="modified residue" description="Phosphoserine" evidence="5">
    <location>
        <position position="113"/>
    </location>
</feature>
<feature type="cross-link" description="Glycyl lysine isopeptide (Lys-Gly) (interchain with G-Cter in SUMO2)" evidence="1">
    <location>
        <position position="95"/>
    </location>
</feature>
<feature type="cross-link" description="Glycyl lysine isopeptide (Lys-Gly) (interchain with G-Cter in SUMO2)" evidence="1">
    <location>
        <position position="220"/>
    </location>
</feature>
<feature type="cross-link" description="Glycyl lysine isopeptide (Lys-Gly) (interchain with G-Cter in SUMO2)" evidence="1">
    <location>
        <position position="304"/>
    </location>
</feature>
<feature type="cross-link" description="Glycyl lysine isopeptide (Lys-Gly) (interchain with G-Cter in SUMO2)" evidence="1">
    <location>
        <position position="305"/>
    </location>
</feature>
<feature type="sequence conflict" description="In Ref. 1; CAA48198." evidence="4" ref="1">
    <original>A</original>
    <variation>R</variation>
    <location>
        <position position="34"/>
    </location>
</feature>
<feature type="sequence conflict" description="In Ref. 1; CAA48198." evidence="4" ref="1">
    <original>A</original>
    <variation>T</variation>
    <location>
        <position position="298"/>
    </location>
</feature>
<accession>Q02614</accession>
<accession>Q8VDJ5</accession>
<sequence length="308" mass="33832">MAGKKNVLSSLAIYAEYSDPESDGETGVDAVGGATEEKGGLVSDAYGEDDFSRPGGDEDGYEEEEDENSKQSEDDDSETEKPEADDPKDNTEAEKRDPQELVASFSERVRNMSPDEIKIPPEPPGRCSNHLQDKIQKLYERKIKEGMDMNYIIQRKKEFRNPSIYEKLIQFCAIDELGTNYPKDMFDPHGWSEDSYYEALAKAQKIEMDKLEKAKKERTKIEFVTGTKKGTTTNATATSTSTASTAVADAQKRKSKWDSAIPVTTIAQPTILTTTATLPAVVTVTTSASGSKTTVISAVGTIVKKAKQ</sequence>
<keyword id="KW-1017">Isopeptide bond</keyword>
<keyword id="KW-0539">Nucleus</keyword>
<keyword id="KW-0597">Phosphoprotein</keyword>
<keyword id="KW-1185">Reference proteome</keyword>
<keyword id="KW-0678">Repressor</keyword>
<keyword id="KW-0804">Transcription</keyword>
<keyword id="KW-0805">Transcription regulation</keyword>
<keyword id="KW-0832">Ubl conjugation</keyword>
<evidence type="ECO:0000250" key="1">
    <source>
        <dbReference type="UniProtKB" id="Q9UHR5"/>
    </source>
</evidence>
<evidence type="ECO:0000256" key="2">
    <source>
        <dbReference type="SAM" id="MobiDB-lite"/>
    </source>
</evidence>
<evidence type="ECO:0000269" key="3">
    <source>
    </source>
</evidence>
<evidence type="ECO:0000305" key="4"/>
<evidence type="ECO:0007744" key="5">
    <source>
    </source>
</evidence>
<proteinExistence type="evidence at protein level"/>
<dbReference type="EMBL" id="X68061">
    <property type="protein sequence ID" value="CAA48198.1"/>
    <property type="molecule type" value="mRNA"/>
</dbReference>
<dbReference type="EMBL" id="AK147869">
    <property type="protein sequence ID" value="BAE28192.1"/>
    <property type="molecule type" value="mRNA"/>
</dbReference>
<dbReference type="EMBL" id="BC021757">
    <property type="protein sequence ID" value="AAH21757.1"/>
    <property type="molecule type" value="mRNA"/>
</dbReference>
<dbReference type="CCDS" id="CCDS25651.1"/>
<dbReference type="PIR" id="S26660">
    <property type="entry name" value="S26660"/>
</dbReference>
<dbReference type="RefSeq" id="NP_065229.2">
    <property type="nucleotide sequence ID" value="NM_020483.3"/>
</dbReference>
<dbReference type="BioGRID" id="208215">
    <property type="interactions" value="2"/>
</dbReference>
<dbReference type="FunCoup" id="Q02614">
    <property type="interactions" value="3540"/>
</dbReference>
<dbReference type="IntAct" id="Q02614">
    <property type="interactions" value="3"/>
</dbReference>
<dbReference type="MINT" id="Q02614"/>
<dbReference type="STRING" id="10090.ENSMUSP00000114844"/>
<dbReference type="GlyGen" id="Q02614">
    <property type="glycosylation" value="9 sites, 1 N-linked glycan (1 site), 1 O-linked glycan (8 sites)"/>
</dbReference>
<dbReference type="iPTMnet" id="Q02614"/>
<dbReference type="PhosphoSitePlus" id="Q02614"/>
<dbReference type="jPOST" id="Q02614"/>
<dbReference type="PaxDb" id="10090-ENSMUSP00000114844"/>
<dbReference type="PeptideAtlas" id="Q02614"/>
<dbReference type="ProteomicsDB" id="253381"/>
<dbReference type="Pumba" id="Q02614"/>
<dbReference type="Antibodypedia" id="19600">
    <property type="antibodies" value="286 antibodies from 27 providers"/>
</dbReference>
<dbReference type="DNASU" id="57230"/>
<dbReference type="Ensembl" id="ENSMUST00000140991.2">
    <property type="protein sequence ID" value="ENSMUSP00000114844.2"/>
    <property type="gene ID" value="ENSMUSG00000020755.10"/>
</dbReference>
<dbReference type="GeneID" id="57230"/>
<dbReference type="KEGG" id="mmu:57230"/>
<dbReference type="UCSC" id="uc007mjd.1">
    <property type="organism name" value="mouse"/>
</dbReference>
<dbReference type="AGR" id="MGI:1927479"/>
<dbReference type="CTD" id="29115"/>
<dbReference type="MGI" id="MGI:1927479">
    <property type="gene designation" value="Sap30bp"/>
</dbReference>
<dbReference type="VEuPathDB" id="HostDB:ENSMUSG00000020755"/>
<dbReference type="eggNOG" id="KOG2959">
    <property type="taxonomic scope" value="Eukaryota"/>
</dbReference>
<dbReference type="GeneTree" id="ENSGT00390000007870"/>
<dbReference type="HOGENOM" id="CLU_053268_0_1_1"/>
<dbReference type="InParanoid" id="Q02614"/>
<dbReference type="OMA" id="PVSFHRC"/>
<dbReference type="OrthoDB" id="1714508at2759"/>
<dbReference type="PhylomeDB" id="Q02614"/>
<dbReference type="TreeFam" id="TF323387"/>
<dbReference type="BioGRID-ORCS" id="57230">
    <property type="hits" value="23 hits in 77 CRISPR screens"/>
</dbReference>
<dbReference type="ChiTaRS" id="Sap30bp">
    <property type="organism name" value="mouse"/>
</dbReference>
<dbReference type="PRO" id="PR:Q02614"/>
<dbReference type="Proteomes" id="UP000000589">
    <property type="component" value="Chromosome 11"/>
</dbReference>
<dbReference type="RNAct" id="Q02614">
    <property type="molecule type" value="protein"/>
</dbReference>
<dbReference type="Bgee" id="ENSMUSG00000020755">
    <property type="expression patterns" value="Expressed in embryonic brain and 248 other cell types or tissues"/>
</dbReference>
<dbReference type="GO" id="GO:0045111">
    <property type="term" value="C:intermediate filament cytoskeleton"/>
    <property type="evidence" value="ECO:0007669"/>
    <property type="project" value="Ensembl"/>
</dbReference>
<dbReference type="GO" id="GO:0005654">
    <property type="term" value="C:nucleoplasm"/>
    <property type="evidence" value="ECO:0007669"/>
    <property type="project" value="Ensembl"/>
</dbReference>
<dbReference type="GO" id="GO:0005634">
    <property type="term" value="C:nucleus"/>
    <property type="evidence" value="ECO:0000250"/>
    <property type="project" value="UniProtKB"/>
</dbReference>
<dbReference type="GO" id="GO:0006355">
    <property type="term" value="P:regulation of DNA-templated transcription"/>
    <property type="evidence" value="ECO:0007669"/>
    <property type="project" value="InterPro"/>
</dbReference>
<dbReference type="GO" id="GO:0009615">
    <property type="term" value="P:response to virus"/>
    <property type="evidence" value="ECO:0007669"/>
    <property type="project" value="Ensembl"/>
</dbReference>
<dbReference type="InterPro" id="IPR012479">
    <property type="entry name" value="SAP30BP"/>
</dbReference>
<dbReference type="PANTHER" id="PTHR13464:SF0">
    <property type="entry name" value="SAP30-BINDING PROTEIN"/>
    <property type="match status" value="1"/>
</dbReference>
<dbReference type="PANTHER" id="PTHR13464">
    <property type="entry name" value="TRANSCRIPTIONAL REGULATOR PROTEIN HCNGP"/>
    <property type="match status" value="1"/>
</dbReference>
<dbReference type="Pfam" id="PF07818">
    <property type="entry name" value="HCNGP"/>
    <property type="match status" value="1"/>
</dbReference>